<dbReference type="EMBL" id="BC085928">
    <property type="protein sequence ID" value="AAH85928.1"/>
    <property type="molecule type" value="mRNA"/>
</dbReference>
<dbReference type="RefSeq" id="NP_001008364.1">
    <property type="nucleotide sequence ID" value="NM_001008363.1"/>
</dbReference>
<dbReference type="RefSeq" id="XP_038945486.1">
    <property type="nucleotide sequence ID" value="XM_039089558.1"/>
</dbReference>
<dbReference type="SMR" id="Q5U2P3"/>
<dbReference type="FunCoup" id="Q5U2P3">
    <property type="interactions" value="749"/>
</dbReference>
<dbReference type="STRING" id="10116.ENSRNOP00000043105"/>
<dbReference type="PhosphoSitePlus" id="Q5U2P3"/>
<dbReference type="PaxDb" id="10116-ENSRNOP00000043105"/>
<dbReference type="Ensembl" id="ENSRNOT00000083814.2">
    <property type="protein sequence ID" value="ENSRNOP00000069561.1"/>
    <property type="gene ID" value="ENSRNOG00000032917.4"/>
</dbReference>
<dbReference type="GeneID" id="360772"/>
<dbReference type="KEGG" id="rno:360772"/>
<dbReference type="UCSC" id="RGD:1310991">
    <property type="organism name" value="rat"/>
</dbReference>
<dbReference type="AGR" id="RGD:1310991"/>
<dbReference type="CTD" id="90637"/>
<dbReference type="RGD" id="1310991">
    <property type="gene designation" value="Zfand2a"/>
</dbReference>
<dbReference type="eggNOG" id="KOG3183">
    <property type="taxonomic scope" value="Eukaryota"/>
</dbReference>
<dbReference type="GeneTree" id="ENSGT00940000161571"/>
<dbReference type="HOGENOM" id="CLU_061621_3_0_1"/>
<dbReference type="InParanoid" id="Q5U2P3"/>
<dbReference type="OMA" id="YKSHECP"/>
<dbReference type="OrthoDB" id="431929at2759"/>
<dbReference type="PhylomeDB" id="Q5U2P3"/>
<dbReference type="TreeFam" id="TF314219"/>
<dbReference type="PRO" id="PR:Q5U2P3"/>
<dbReference type="Proteomes" id="UP000002494">
    <property type="component" value="Chromosome 12"/>
</dbReference>
<dbReference type="Bgee" id="ENSRNOG00000032917">
    <property type="expression patterns" value="Expressed in jejunum and 20 other cell types or tissues"/>
</dbReference>
<dbReference type="GO" id="GO:0005737">
    <property type="term" value="C:cytoplasm"/>
    <property type="evidence" value="ECO:0000318"/>
    <property type="project" value="GO_Central"/>
</dbReference>
<dbReference type="GO" id="GO:0005783">
    <property type="term" value="C:endoplasmic reticulum"/>
    <property type="evidence" value="ECO:0000318"/>
    <property type="project" value="GO_Central"/>
</dbReference>
<dbReference type="GO" id="GO:0005634">
    <property type="term" value="C:nucleus"/>
    <property type="evidence" value="ECO:0007669"/>
    <property type="project" value="UniProtKB-SubCell"/>
</dbReference>
<dbReference type="GO" id="GO:0000502">
    <property type="term" value="C:proteasome complex"/>
    <property type="evidence" value="ECO:0000266"/>
    <property type="project" value="RGD"/>
</dbReference>
<dbReference type="GO" id="GO:0008270">
    <property type="term" value="F:zinc ion binding"/>
    <property type="evidence" value="ECO:0007669"/>
    <property type="project" value="UniProtKB-KW"/>
</dbReference>
<dbReference type="GO" id="GO:0071243">
    <property type="term" value="P:cellular response to arsenic-containing substance"/>
    <property type="evidence" value="ECO:0000266"/>
    <property type="project" value="RGD"/>
</dbReference>
<dbReference type="GO" id="GO:0032436">
    <property type="term" value="P:positive regulation of proteasomal ubiquitin-dependent protein catabolic process"/>
    <property type="evidence" value="ECO:0000266"/>
    <property type="project" value="RGD"/>
</dbReference>
<dbReference type="GO" id="GO:0043161">
    <property type="term" value="P:proteasome-mediated ubiquitin-dependent protein catabolic process"/>
    <property type="evidence" value="ECO:0000318"/>
    <property type="project" value="GO_Central"/>
</dbReference>
<dbReference type="GO" id="GO:0045047">
    <property type="term" value="P:protein targeting to ER"/>
    <property type="evidence" value="ECO:0000318"/>
    <property type="project" value="GO_Central"/>
</dbReference>
<dbReference type="FunFam" id="4.10.1110.10:FF:000003">
    <property type="entry name" value="AN1-type zinc finger protein 2B isoform X1"/>
    <property type="match status" value="1"/>
</dbReference>
<dbReference type="FunFam" id="4.10.1110.10:FF:000004">
    <property type="entry name" value="AN1-type zinc finger protein 2B isoform X1"/>
    <property type="match status" value="1"/>
</dbReference>
<dbReference type="Gene3D" id="4.10.1110.10">
    <property type="entry name" value="AN1-like Zinc finger"/>
    <property type="match status" value="2"/>
</dbReference>
<dbReference type="InterPro" id="IPR035896">
    <property type="entry name" value="AN1-like_Znf"/>
</dbReference>
<dbReference type="InterPro" id="IPR000058">
    <property type="entry name" value="Znf_AN1"/>
</dbReference>
<dbReference type="PANTHER" id="PTHR14677:SF11">
    <property type="entry name" value="AN1-TYPE ZINC FINGER PROTEIN 2A"/>
    <property type="match status" value="1"/>
</dbReference>
<dbReference type="PANTHER" id="PTHR14677">
    <property type="entry name" value="ARSENITE INDUCUBLE RNA ASSOCIATED PROTEIN AIP-1-RELATED"/>
    <property type="match status" value="1"/>
</dbReference>
<dbReference type="Pfam" id="PF01428">
    <property type="entry name" value="zf-AN1"/>
    <property type="match status" value="2"/>
</dbReference>
<dbReference type="Pfam" id="PF25403">
    <property type="entry name" value="zf-C2H2_ZFAND2"/>
    <property type="match status" value="1"/>
</dbReference>
<dbReference type="SMART" id="SM00154">
    <property type="entry name" value="ZnF_AN1"/>
    <property type="match status" value="2"/>
</dbReference>
<dbReference type="SUPFAM" id="SSF118310">
    <property type="entry name" value="AN1-like Zinc finger"/>
    <property type="match status" value="2"/>
</dbReference>
<dbReference type="PROSITE" id="PS51039">
    <property type="entry name" value="ZF_AN1"/>
    <property type="match status" value="2"/>
</dbReference>
<protein>
    <recommendedName>
        <fullName>AN1-type zinc finger protein 2A</fullName>
    </recommendedName>
</protein>
<accession>Q5U2P3</accession>
<keyword id="KW-0963">Cytoplasm</keyword>
<keyword id="KW-0479">Metal-binding</keyword>
<keyword id="KW-0539">Nucleus</keyword>
<keyword id="KW-1185">Reference proteome</keyword>
<keyword id="KW-0677">Repeat</keyword>
<keyword id="KW-0862">Zinc</keyword>
<keyword id="KW-0863">Zinc-finger</keyword>
<sequence length="171" mass="19267">MEFPDLGKHCSEPTCKQLDFLPITCDACKQDFCKDHFSYSGHKCPFAFKKDVQVPVCPLCNAPIPVRRGDIPDVVVGEHMDRDCTFHPGRNRNKVFTHRCSKEGCRKKEMLQLACAQCHGNFCIQHRHPLDHNCQAGSSSVSRGRSSASRAAEQKPSGVSWLAQRLRRTVK</sequence>
<proteinExistence type="evidence at transcript level"/>
<evidence type="ECO:0000250" key="1"/>
<evidence type="ECO:0000255" key="2">
    <source>
        <dbReference type="PROSITE-ProRule" id="PRU00449"/>
    </source>
</evidence>
<evidence type="ECO:0000256" key="3">
    <source>
        <dbReference type="SAM" id="MobiDB-lite"/>
    </source>
</evidence>
<reference key="1">
    <citation type="journal article" date="2004" name="Genome Res.">
        <title>The status, quality, and expansion of the NIH full-length cDNA project: the Mammalian Gene Collection (MGC).</title>
        <authorList>
            <consortium name="The MGC Project Team"/>
        </authorList>
    </citation>
    <scope>NUCLEOTIDE SEQUENCE [LARGE SCALE MRNA]</scope>
    <source>
        <tissue>Kidney</tissue>
    </source>
</reference>
<name>ZFN2A_RAT</name>
<feature type="chain" id="PRO_0000269890" description="AN1-type zinc finger protein 2A">
    <location>
        <begin position="1"/>
        <end position="171"/>
    </location>
</feature>
<feature type="zinc finger region" description="AN1-type 1" evidence="2">
    <location>
        <begin position="4"/>
        <end position="52"/>
    </location>
</feature>
<feature type="zinc finger region" description="AN1-type 2" evidence="2">
    <location>
        <begin position="94"/>
        <end position="142"/>
    </location>
</feature>
<feature type="region of interest" description="Disordered" evidence="3">
    <location>
        <begin position="135"/>
        <end position="171"/>
    </location>
</feature>
<feature type="compositionally biased region" description="Low complexity" evidence="3">
    <location>
        <begin position="136"/>
        <end position="151"/>
    </location>
</feature>
<feature type="binding site" evidence="2">
    <location>
        <position position="10"/>
    </location>
    <ligand>
        <name>Zn(2+)</name>
        <dbReference type="ChEBI" id="CHEBI:29105"/>
        <label>1</label>
    </ligand>
</feature>
<feature type="binding site" evidence="2">
    <location>
        <position position="15"/>
    </location>
    <ligand>
        <name>Zn(2+)</name>
        <dbReference type="ChEBI" id="CHEBI:29105"/>
        <label>1</label>
    </ligand>
</feature>
<feature type="binding site" evidence="2">
    <location>
        <position position="25"/>
    </location>
    <ligand>
        <name>Zn(2+)</name>
        <dbReference type="ChEBI" id="CHEBI:29105"/>
        <label>2</label>
    </ligand>
</feature>
<feature type="binding site" evidence="2">
    <location>
        <position position="28"/>
    </location>
    <ligand>
        <name>Zn(2+)</name>
        <dbReference type="ChEBI" id="CHEBI:29105"/>
        <label>2</label>
    </ligand>
</feature>
<feature type="binding site" evidence="2">
    <location>
        <position position="33"/>
    </location>
    <ligand>
        <name>Zn(2+)</name>
        <dbReference type="ChEBI" id="CHEBI:29105"/>
        <label>1</label>
    </ligand>
</feature>
<feature type="binding site" evidence="2">
    <location>
        <position position="36"/>
    </location>
    <ligand>
        <name>Zn(2+)</name>
        <dbReference type="ChEBI" id="CHEBI:29105"/>
        <label>1</label>
    </ligand>
</feature>
<feature type="binding site" evidence="2">
    <location>
        <position position="42"/>
    </location>
    <ligand>
        <name>Zn(2+)</name>
        <dbReference type="ChEBI" id="CHEBI:29105"/>
        <label>2</label>
    </ligand>
</feature>
<feature type="binding site" evidence="2">
    <location>
        <position position="44"/>
    </location>
    <ligand>
        <name>Zn(2+)</name>
        <dbReference type="ChEBI" id="CHEBI:29105"/>
        <label>2</label>
    </ligand>
</feature>
<feature type="binding site" evidence="2">
    <location>
        <position position="100"/>
    </location>
    <ligand>
        <name>Zn(2+)</name>
        <dbReference type="ChEBI" id="CHEBI:29105"/>
        <label>3</label>
    </ligand>
</feature>
<feature type="binding site" evidence="2">
    <location>
        <position position="105"/>
    </location>
    <ligand>
        <name>Zn(2+)</name>
        <dbReference type="ChEBI" id="CHEBI:29105"/>
        <label>3</label>
    </ligand>
</feature>
<feature type="binding site" evidence="2">
    <location>
        <position position="115"/>
    </location>
    <ligand>
        <name>Zn(2+)</name>
        <dbReference type="ChEBI" id="CHEBI:29105"/>
        <label>4</label>
    </ligand>
</feature>
<feature type="binding site" evidence="2">
    <location>
        <position position="118"/>
    </location>
    <ligand>
        <name>Zn(2+)</name>
        <dbReference type="ChEBI" id="CHEBI:29105"/>
        <label>4</label>
    </ligand>
</feature>
<feature type="binding site" evidence="2">
    <location>
        <position position="123"/>
    </location>
    <ligand>
        <name>Zn(2+)</name>
        <dbReference type="ChEBI" id="CHEBI:29105"/>
        <label>3</label>
    </ligand>
</feature>
<feature type="binding site" evidence="2">
    <location>
        <position position="126"/>
    </location>
    <ligand>
        <name>Zn(2+)</name>
        <dbReference type="ChEBI" id="CHEBI:29105"/>
        <label>3</label>
    </ligand>
</feature>
<feature type="binding site" evidence="2">
    <location>
        <position position="132"/>
    </location>
    <ligand>
        <name>Zn(2+)</name>
        <dbReference type="ChEBI" id="CHEBI:29105"/>
        <label>4</label>
    </ligand>
</feature>
<feature type="binding site" evidence="2">
    <location>
        <position position="134"/>
    </location>
    <ligand>
        <name>Zn(2+)</name>
        <dbReference type="ChEBI" id="CHEBI:29105"/>
        <label>4</label>
    </ligand>
</feature>
<organism>
    <name type="scientific">Rattus norvegicus</name>
    <name type="common">Rat</name>
    <dbReference type="NCBI Taxonomy" id="10116"/>
    <lineage>
        <taxon>Eukaryota</taxon>
        <taxon>Metazoa</taxon>
        <taxon>Chordata</taxon>
        <taxon>Craniata</taxon>
        <taxon>Vertebrata</taxon>
        <taxon>Euteleostomi</taxon>
        <taxon>Mammalia</taxon>
        <taxon>Eutheria</taxon>
        <taxon>Euarchontoglires</taxon>
        <taxon>Glires</taxon>
        <taxon>Rodentia</taxon>
        <taxon>Myomorpha</taxon>
        <taxon>Muroidea</taxon>
        <taxon>Muridae</taxon>
        <taxon>Murinae</taxon>
        <taxon>Rattus</taxon>
    </lineage>
</organism>
<gene>
    <name type="primary">Zfand2a</name>
</gene>
<comment type="subcellular location">
    <subcellularLocation>
        <location evidence="1">Cytoplasm</location>
    </subcellularLocation>
    <subcellularLocation>
        <location evidence="1">Nucleus</location>
    </subcellularLocation>
</comment>